<comment type="function">
    <text evidence="1">Polycomb group (PcG) protein that specifically recognizes and binds mono- and dimethyllysine residues on target proteins, thereby acting as a 'reader' of a network of post-translational modifications. PcG proteins maintain the transcriptionally repressive state of genes: acts as a chromatin compaction factor by recognizing and binding mono- and dimethylated histone H1b/H1-4 at 'Lys-26' (H1bK26me1 and H1bK26me2) and histone H4 at 'Lys-20' (H4K20me1 and H4K20me2), leading to condense chromatin and repress transcription (By similarity).</text>
</comment>
<comment type="subunit">
    <text evidence="1">Homodimer.</text>
</comment>
<comment type="subcellular location">
    <subcellularLocation>
        <location evidence="1">Nucleus</location>
    </subcellularLocation>
</comment>
<comment type="domain">
    <text evidence="1">The MBT repeat 2 specifically recognizes and binds monomethylated and dimethylated proteins. In contrast, it does not bind trimethylated proteins. The MBT repeat 1 does not bind methylated peptides but inserts a proline ring in a Pro-Ser-Ser/Thr sequence context (By similarity).</text>
</comment>
<protein>
    <recommendedName>
        <fullName>Lethal(3)malignant brain tumor-like protein 1</fullName>
        <shortName>H-l(3)mbt</shortName>
        <shortName>H-l(3)mbt protein</shortName>
        <shortName>L(3)mbt-like</shortName>
    </recommendedName>
    <alternativeName>
        <fullName>L(3)mbt protein homolog</fullName>
    </alternativeName>
</protein>
<name>LMBL1_CHICK</name>
<evidence type="ECO:0000250" key="1"/>
<evidence type="ECO:0000255" key="2">
    <source>
        <dbReference type="PROSITE-ProRule" id="PRU00184"/>
    </source>
</evidence>
<evidence type="ECO:0000255" key="3">
    <source>
        <dbReference type="PROSITE-ProRule" id="PRU01143"/>
    </source>
</evidence>
<evidence type="ECO:0000256" key="4">
    <source>
        <dbReference type="SAM" id="MobiDB-lite"/>
    </source>
</evidence>
<keyword id="KW-0156">Chromatin regulator</keyword>
<keyword id="KW-0479">Metal-binding</keyword>
<keyword id="KW-0539">Nucleus</keyword>
<keyword id="KW-1185">Reference proteome</keyword>
<keyword id="KW-0677">Repeat</keyword>
<keyword id="KW-0678">Repressor</keyword>
<keyword id="KW-0804">Transcription</keyword>
<keyword id="KW-0805">Transcription regulation</keyword>
<keyword id="KW-0862">Zinc</keyword>
<keyword id="KW-0863">Zinc-finger</keyword>
<proteinExistence type="inferred from homology"/>
<feature type="chain" id="PRO_0000405833" description="Lethal(3)malignant brain tumor-like protein 1">
    <location>
        <begin position="1"/>
        <end position="847"/>
    </location>
</feature>
<feature type="repeat" description="MBT 1">
    <location>
        <begin position="300"/>
        <end position="400"/>
    </location>
</feature>
<feature type="repeat" description="MBT 2">
    <location>
        <begin position="408"/>
        <end position="507"/>
    </location>
</feature>
<feature type="repeat" description="MBT 3">
    <location>
        <begin position="516"/>
        <end position="611"/>
    </location>
</feature>
<feature type="domain" description="SAM" evidence="2">
    <location>
        <begin position="778"/>
        <end position="842"/>
    </location>
</feature>
<feature type="zinc finger region" description="CCHHC-type" evidence="3">
    <location>
        <begin position="639"/>
        <end position="682"/>
    </location>
</feature>
<feature type="region of interest" description="Disordered" evidence="4">
    <location>
        <begin position="65"/>
        <end position="87"/>
    </location>
</feature>
<feature type="region of interest" description="Disordered" evidence="4">
    <location>
        <begin position="142"/>
        <end position="163"/>
    </location>
</feature>
<feature type="region of interest" description="Disordered" evidence="4">
    <location>
        <begin position="237"/>
        <end position="296"/>
    </location>
</feature>
<feature type="region of interest" description="Interaction with monomethylated and dimethylated peptides" evidence="1">
    <location>
        <begin position="473"/>
        <end position="480"/>
    </location>
</feature>
<feature type="compositionally biased region" description="Basic and acidic residues" evidence="4">
    <location>
        <begin position="65"/>
        <end position="82"/>
    </location>
</feature>
<feature type="compositionally biased region" description="Basic and acidic residues" evidence="4">
    <location>
        <begin position="144"/>
        <end position="155"/>
    </location>
</feature>
<feature type="binding site" evidence="3">
    <location>
        <position position="648"/>
    </location>
    <ligand>
        <name>Zn(2+)</name>
        <dbReference type="ChEBI" id="CHEBI:29105"/>
    </ligand>
</feature>
<feature type="binding site" evidence="3">
    <location>
        <position position="653"/>
    </location>
    <ligand>
        <name>Zn(2+)</name>
        <dbReference type="ChEBI" id="CHEBI:29105"/>
    </ligand>
</feature>
<feature type="binding site" evidence="3">
    <location>
        <position position="666"/>
    </location>
    <ligand>
        <name>Zn(2+)</name>
        <dbReference type="ChEBI" id="CHEBI:29105"/>
    </ligand>
</feature>
<feature type="binding site" evidence="3">
    <location>
        <position position="672"/>
    </location>
    <ligand>
        <name>Zn(2+)</name>
        <dbReference type="ChEBI" id="CHEBI:29105"/>
    </ligand>
</feature>
<feature type="site" description="Mediates recognition of monomethylated and dimethylated peptides" evidence="1">
    <location>
        <position position="449"/>
    </location>
</feature>
<feature type="site" description="Positioned at the entrance of MBT 2 and is required for recognition of monomethylated and dimethylated peptides" evidence="1">
    <location>
        <position position="452"/>
    </location>
</feature>
<organism>
    <name type="scientific">Gallus gallus</name>
    <name type="common">Chicken</name>
    <dbReference type="NCBI Taxonomy" id="9031"/>
    <lineage>
        <taxon>Eukaryota</taxon>
        <taxon>Metazoa</taxon>
        <taxon>Chordata</taxon>
        <taxon>Craniata</taxon>
        <taxon>Vertebrata</taxon>
        <taxon>Euteleostomi</taxon>
        <taxon>Archelosauria</taxon>
        <taxon>Archosauria</taxon>
        <taxon>Dinosauria</taxon>
        <taxon>Saurischia</taxon>
        <taxon>Theropoda</taxon>
        <taxon>Coelurosauria</taxon>
        <taxon>Aves</taxon>
        <taxon>Neognathae</taxon>
        <taxon>Galloanserae</taxon>
        <taxon>Galliformes</taxon>
        <taxon>Phasianidae</taxon>
        <taxon>Phasianinae</taxon>
        <taxon>Gallus</taxon>
    </lineage>
</organism>
<gene>
    <name type="primary">L3MBTL1</name>
    <name type="synonym">L3MBT</name>
    <name type="synonym">L3MBTL</name>
</gene>
<dbReference type="EMBL" id="AADN02019575">
    <property type="status" value="NOT_ANNOTATED_CDS"/>
    <property type="molecule type" value="Genomic_DNA"/>
</dbReference>
<dbReference type="SMR" id="E1C2V1"/>
<dbReference type="FunCoup" id="E1C2V1">
    <property type="interactions" value="297"/>
</dbReference>
<dbReference type="STRING" id="9031.ENSGALP00000043698"/>
<dbReference type="GlyGen" id="E1C2V1">
    <property type="glycosylation" value="1 site"/>
</dbReference>
<dbReference type="PaxDb" id="9031-ENSGALP00000001451"/>
<dbReference type="VEuPathDB" id="HostDB:geneid_419115"/>
<dbReference type="eggNOG" id="KOG3766">
    <property type="taxonomic scope" value="Eukaryota"/>
</dbReference>
<dbReference type="InParanoid" id="E1C2V1"/>
<dbReference type="OrthoDB" id="8188861at2759"/>
<dbReference type="PhylomeDB" id="E1C2V1"/>
<dbReference type="TreeFam" id="TF316498"/>
<dbReference type="Proteomes" id="UP000000539">
    <property type="component" value="Unassembled WGS sequence"/>
</dbReference>
<dbReference type="GO" id="GO:0005634">
    <property type="term" value="C:nucleus"/>
    <property type="evidence" value="ECO:0000318"/>
    <property type="project" value="GO_Central"/>
</dbReference>
<dbReference type="GO" id="GO:0003682">
    <property type="term" value="F:chromatin binding"/>
    <property type="evidence" value="ECO:0000318"/>
    <property type="project" value="GO_Central"/>
</dbReference>
<dbReference type="GO" id="GO:0042393">
    <property type="term" value="F:histone binding"/>
    <property type="evidence" value="ECO:0000318"/>
    <property type="project" value="GO_Central"/>
</dbReference>
<dbReference type="GO" id="GO:0140005">
    <property type="term" value="F:histone H4K20me2 reader activity"/>
    <property type="evidence" value="ECO:0000250"/>
    <property type="project" value="UniProtKB"/>
</dbReference>
<dbReference type="GO" id="GO:0008270">
    <property type="term" value="F:zinc ion binding"/>
    <property type="evidence" value="ECO:0007669"/>
    <property type="project" value="UniProtKB-KW"/>
</dbReference>
<dbReference type="GO" id="GO:0045892">
    <property type="term" value="P:negative regulation of DNA-templated transcription"/>
    <property type="evidence" value="ECO:0000318"/>
    <property type="project" value="GO_Central"/>
</dbReference>
<dbReference type="CDD" id="cd20131">
    <property type="entry name" value="MBT_L3MBTL1_rpt1"/>
    <property type="match status" value="1"/>
</dbReference>
<dbReference type="CDD" id="cd20134">
    <property type="entry name" value="MBT_L3MBTL1_rpt2"/>
    <property type="match status" value="1"/>
</dbReference>
<dbReference type="CDD" id="cd20137">
    <property type="entry name" value="MBT_L3MBTL1_rpt3"/>
    <property type="match status" value="1"/>
</dbReference>
<dbReference type="CDD" id="cd09582">
    <property type="entry name" value="SAM_Scm-like-3MBT3_4"/>
    <property type="match status" value="1"/>
</dbReference>
<dbReference type="FunFam" id="2.30.30.140:FF:000007">
    <property type="entry name" value="Lethal(3)malignant brain tumor-like protein 1"/>
    <property type="match status" value="2"/>
</dbReference>
<dbReference type="FunFam" id="1.10.150.50:FF:000035">
    <property type="entry name" value="lethal(3)malignant brain tumor-like protein 3 isoform X2"/>
    <property type="match status" value="1"/>
</dbReference>
<dbReference type="FunFam" id="4.10.320.30:FF:000001">
    <property type="entry name" value="Myelin transcription factor 1-like, a"/>
    <property type="match status" value="1"/>
</dbReference>
<dbReference type="Gene3D" id="2.30.30.140">
    <property type="match status" value="3"/>
</dbReference>
<dbReference type="Gene3D" id="4.10.320.30">
    <property type="match status" value="1"/>
</dbReference>
<dbReference type="Gene3D" id="1.10.150.50">
    <property type="entry name" value="Transcription Factor, Ets-1"/>
    <property type="match status" value="1"/>
</dbReference>
<dbReference type="InterPro" id="IPR004092">
    <property type="entry name" value="Mbt"/>
</dbReference>
<dbReference type="InterPro" id="IPR047361">
    <property type="entry name" value="MBT_L3MBTL1_rpt1"/>
</dbReference>
<dbReference type="InterPro" id="IPR047362">
    <property type="entry name" value="MBT_L3MBTL1_rpt3"/>
</dbReference>
<dbReference type="InterPro" id="IPR050548">
    <property type="entry name" value="PcG_chromatin_remod_factors"/>
</dbReference>
<dbReference type="InterPro" id="IPR001660">
    <property type="entry name" value="SAM"/>
</dbReference>
<dbReference type="InterPro" id="IPR013761">
    <property type="entry name" value="SAM/pointed_sf"/>
</dbReference>
<dbReference type="InterPro" id="IPR002515">
    <property type="entry name" value="Znf_C2H2C"/>
</dbReference>
<dbReference type="InterPro" id="IPR036060">
    <property type="entry name" value="Znf_C2H2C_sf"/>
</dbReference>
<dbReference type="PANTHER" id="PTHR12247:SF69">
    <property type="entry name" value="LETHAL(3)MALIGNANT BRAIN TUMOR-LIKE PROTEIN 1"/>
    <property type="match status" value="1"/>
</dbReference>
<dbReference type="PANTHER" id="PTHR12247">
    <property type="entry name" value="POLYCOMB GROUP PROTEIN"/>
    <property type="match status" value="1"/>
</dbReference>
<dbReference type="Pfam" id="PF02820">
    <property type="entry name" value="MBT"/>
    <property type="match status" value="3"/>
</dbReference>
<dbReference type="Pfam" id="PF00536">
    <property type="entry name" value="SAM_1"/>
    <property type="match status" value="1"/>
</dbReference>
<dbReference type="Pfam" id="PF01530">
    <property type="entry name" value="zf-C2HC"/>
    <property type="match status" value="1"/>
</dbReference>
<dbReference type="SMART" id="SM00561">
    <property type="entry name" value="MBT"/>
    <property type="match status" value="3"/>
</dbReference>
<dbReference type="SMART" id="SM00454">
    <property type="entry name" value="SAM"/>
    <property type="match status" value="1"/>
</dbReference>
<dbReference type="SUPFAM" id="SSF103637">
    <property type="entry name" value="CCHHC domain"/>
    <property type="match status" value="1"/>
</dbReference>
<dbReference type="SUPFAM" id="SSF47769">
    <property type="entry name" value="SAM/Pointed domain"/>
    <property type="match status" value="1"/>
</dbReference>
<dbReference type="SUPFAM" id="SSF63748">
    <property type="entry name" value="Tudor/PWWP/MBT"/>
    <property type="match status" value="3"/>
</dbReference>
<dbReference type="PROSITE" id="PS51079">
    <property type="entry name" value="MBT"/>
    <property type="match status" value="3"/>
</dbReference>
<dbReference type="PROSITE" id="PS50105">
    <property type="entry name" value="SAM_DOMAIN"/>
    <property type="match status" value="1"/>
</dbReference>
<dbReference type="PROSITE" id="PS51802">
    <property type="entry name" value="ZF_CCHHC"/>
    <property type="match status" value="1"/>
</dbReference>
<sequence>MDGRAEMEVVRTTKGNAAGEVSVHVVTTESTVQSTHLPTTAFIFPSQANATTINLPTSTLEIQRFPREPPRNTGAERPEKGVGSEPITATVIPQISGVQTCNTVRVLEWKDGVATLPGSNLRFRINEYGTLKVVSADKMPPAEAVKEGHAKKDGDSDVAPTSRDNTIVAQDVPEQSKLPTADSICHCDTCGRRHVSDGAREGRGFCSEHCHQQFKERSVIVENSASSTSATEILKPVKKRKRKDYQSPSEEDYESEQMEEKQEEMKNSVGDSAISNPEAHAWSQHSTEGPGASEEKKEGWSWASYLEEQKAVAAPLDLFQDYQVASQHKNGFKVGMKLEGIDPQHPSMYFILTVAEVCGYRMRLHFDGYSECHDFWLNADSPDIHPAGWFEETGHKLQPPKGYKEEEFSWTNYLKITKAQAAPKHLFVIRNTHEAPPGFEVGMKLEAVDRMNPSLICVATVTDVVDDRFLVHFDNWDDTYDYWCDPSSPYIHPVGWCQEHGKPLTPPQDYPDPDNFIWEKYLKETGASAVPAWAFKVRPPHGFLVNMKLEAVDRRTPSFIRVASVEDVEDHRIKIHFDGWSHVYDFWIDADHPDIHPIGWCSKTGHPLQPPLRPKEPASSAHSGCPTLGCKNIPHTKSSKYSFHHRKCPTPGCDGSGHVTGRFTAHYCLSGCPLAEKNQGKLKADLSDTEASTRKRNLIGFPQRKKSRHHGSFRGRPPKYRKIQQEDFQTISSDNMHQSLFMSALSAHPDRSLSLCWEQHCKLLPGVAGITATTVAKWTIDEVFSFVQTLTGCEDQAKLFKDEMIDGEAFLLLTQADIVKIMSVKLGPALKIYNAILMFKNADDTLK</sequence>
<accession>E1C2V1</accession>
<reference key="1">
    <citation type="journal article" date="2004" name="Nature">
        <title>Sequence and comparative analysis of the chicken genome provide unique perspectives on vertebrate evolution.</title>
        <authorList>
            <person name="Hillier L.W."/>
            <person name="Miller W."/>
            <person name="Birney E."/>
            <person name="Warren W."/>
            <person name="Hardison R.C."/>
            <person name="Ponting C.P."/>
            <person name="Bork P."/>
            <person name="Burt D.W."/>
            <person name="Groenen M.A.M."/>
            <person name="Delany M.E."/>
            <person name="Dodgson J.B."/>
            <person name="Chinwalla A.T."/>
            <person name="Cliften P.F."/>
            <person name="Clifton S.W."/>
            <person name="Delehaunty K.D."/>
            <person name="Fronick C."/>
            <person name="Fulton R.S."/>
            <person name="Graves T.A."/>
            <person name="Kremitzki C."/>
            <person name="Layman D."/>
            <person name="Magrini V."/>
            <person name="McPherson J.D."/>
            <person name="Miner T.L."/>
            <person name="Minx P."/>
            <person name="Nash W.E."/>
            <person name="Nhan M.N."/>
            <person name="Nelson J.O."/>
            <person name="Oddy L.G."/>
            <person name="Pohl C.S."/>
            <person name="Randall-Maher J."/>
            <person name="Smith S.M."/>
            <person name="Wallis J.W."/>
            <person name="Yang S.-P."/>
            <person name="Romanov M.N."/>
            <person name="Rondelli C.M."/>
            <person name="Paton B."/>
            <person name="Smith J."/>
            <person name="Morrice D."/>
            <person name="Daniels L."/>
            <person name="Tempest H.G."/>
            <person name="Robertson L."/>
            <person name="Masabanda J.S."/>
            <person name="Griffin D.K."/>
            <person name="Vignal A."/>
            <person name="Fillon V."/>
            <person name="Jacobbson L."/>
            <person name="Kerje S."/>
            <person name="Andersson L."/>
            <person name="Crooijmans R.P."/>
            <person name="Aerts J."/>
            <person name="van der Poel J.J."/>
            <person name="Ellegren H."/>
            <person name="Caldwell R.B."/>
            <person name="Hubbard S.J."/>
            <person name="Grafham D.V."/>
            <person name="Kierzek A.M."/>
            <person name="McLaren S.R."/>
            <person name="Overton I.M."/>
            <person name="Arakawa H."/>
            <person name="Beattie K.J."/>
            <person name="Bezzubov Y."/>
            <person name="Boardman P.E."/>
            <person name="Bonfield J.K."/>
            <person name="Croning M.D.R."/>
            <person name="Davies R.M."/>
            <person name="Francis M.D."/>
            <person name="Humphray S.J."/>
            <person name="Scott C.E."/>
            <person name="Taylor R.G."/>
            <person name="Tickle C."/>
            <person name="Brown W.R.A."/>
            <person name="Rogers J."/>
            <person name="Buerstedde J.-M."/>
            <person name="Wilson S.A."/>
            <person name="Stubbs L."/>
            <person name="Ovcharenko I."/>
            <person name="Gordon L."/>
            <person name="Lucas S."/>
            <person name="Miller M.M."/>
            <person name="Inoko H."/>
            <person name="Shiina T."/>
            <person name="Kaufman J."/>
            <person name="Salomonsen J."/>
            <person name="Skjoedt K."/>
            <person name="Wong G.K.-S."/>
            <person name="Wang J."/>
            <person name="Liu B."/>
            <person name="Wang J."/>
            <person name="Yu J."/>
            <person name="Yang H."/>
            <person name="Nefedov M."/>
            <person name="Koriabine M."/>
            <person name="Dejong P.J."/>
            <person name="Goodstadt L."/>
            <person name="Webber C."/>
            <person name="Dickens N.J."/>
            <person name="Letunic I."/>
            <person name="Suyama M."/>
            <person name="Torrents D."/>
            <person name="von Mering C."/>
            <person name="Zdobnov E.M."/>
            <person name="Makova K."/>
            <person name="Nekrutenko A."/>
            <person name="Elnitski L."/>
            <person name="Eswara P."/>
            <person name="King D.C."/>
            <person name="Yang S.-P."/>
            <person name="Tyekucheva S."/>
            <person name="Radakrishnan A."/>
            <person name="Harris R.S."/>
            <person name="Chiaromonte F."/>
            <person name="Taylor J."/>
            <person name="He J."/>
            <person name="Rijnkels M."/>
            <person name="Griffiths-Jones S."/>
            <person name="Ureta-Vidal A."/>
            <person name="Hoffman M.M."/>
            <person name="Severin J."/>
            <person name="Searle S.M.J."/>
            <person name="Law A.S."/>
            <person name="Speed D."/>
            <person name="Waddington D."/>
            <person name="Cheng Z."/>
            <person name="Tuzun E."/>
            <person name="Eichler E."/>
            <person name="Bao Z."/>
            <person name="Flicek P."/>
            <person name="Shteynberg D.D."/>
            <person name="Brent M.R."/>
            <person name="Bye J.M."/>
            <person name="Huckle E.J."/>
            <person name="Chatterji S."/>
            <person name="Dewey C."/>
            <person name="Pachter L."/>
            <person name="Kouranov A."/>
            <person name="Mourelatos Z."/>
            <person name="Hatzigeorgiou A.G."/>
            <person name="Paterson A.H."/>
            <person name="Ivarie R."/>
            <person name="Brandstrom M."/>
            <person name="Axelsson E."/>
            <person name="Backstrom N."/>
            <person name="Berlin S."/>
            <person name="Webster M.T."/>
            <person name="Pourquie O."/>
            <person name="Reymond A."/>
            <person name="Ucla C."/>
            <person name="Antonarakis S.E."/>
            <person name="Long M."/>
            <person name="Emerson J.J."/>
            <person name="Betran E."/>
            <person name="Dupanloup I."/>
            <person name="Kaessmann H."/>
            <person name="Hinrichs A.S."/>
            <person name="Bejerano G."/>
            <person name="Furey T.S."/>
            <person name="Harte R.A."/>
            <person name="Raney B."/>
            <person name="Siepel A."/>
            <person name="Kent W.J."/>
            <person name="Haussler D."/>
            <person name="Eyras E."/>
            <person name="Castelo R."/>
            <person name="Abril J.F."/>
            <person name="Castellano S."/>
            <person name="Camara F."/>
            <person name="Parra G."/>
            <person name="Guigo R."/>
            <person name="Bourque G."/>
            <person name="Tesler G."/>
            <person name="Pevzner P.A."/>
            <person name="Smit A."/>
            <person name="Fulton L.A."/>
            <person name="Mardis E.R."/>
            <person name="Wilson R.K."/>
        </authorList>
    </citation>
    <scope>NUCLEOTIDE SEQUENCE [LARGE SCALE GENOMIC DNA]</scope>
</reference>